<evidence type="ECO:0000250" key="1"/>
<evidence type="ECO:0000250" key="2">
    <source>
        <dbReference type="UniProtKB" id="Q04760"/>
    </source>
</evidence>
<evidence type="ECO:0000255" key="3">
    <source>
        <dbReference type="PROSITE-ProRule" id="PRU01163"/>
    </source>
</evidence>
<evidence type="ECO:0000269" key="4">
    <source>
    </source>
</evidence>
<evidence type="ECO:0000305" key="5"/>
<evidence type="ECO:0000305" key="6">
    <source>
    </source>
</evidence>
<evidence type="ECO:0007744" key="7">
    <source>
        <dbReference type="PDB" id="2ZA0"/>
    </source>
</evidence>
<evidence type="ECO:0007744" key="8">
    <source>
        <dbReference type="PDB" id="4KYH"/>
    </source>
</evidence>
<evidence type="ECO:0007744" key="9">
    <source>
        <dbReference type="PDB" id="4OPN"/>
    </source>
</evidence>
<evidence type="ECO:0007744" key="10">
    <source>
        <dbReference type="PDB" id="4X2A"/>
    </source>
</evidence>
<evidence type="ECO:0007744" key="11">
    <source>
    </source>
</evidence>
<evidence type="ECO:0007829" key="12">
    <source>
        <dbReference type="PDB" id="2ZA0"/>
    </source>
</evidence>
<evidence type="ECO:0007829" key="13">
    <source>
        <dbReference type="PDB" id="4PV5"/>
    </source>
</evidence>
<proteinExistence type="evidence at protein level"/>
<feature type="initiator methionine" description="Removed" evidence="2">
    <location>
        <position position="1"/>
    </location>
</feature>
<feature type="chain" id="PRO_0000168078" description="Lactoylglutathione lyase">
    <location>
        <begin position="2"/>
        <end position="184"/>
    </location>
</feature>
<feature type="domain" description="VOC" evidence="3">
    <location>
        <begin position="31"/>
        <end position="177"/>
    </location>
</feature>
<feature type="active site" description="Proton donor/acceptor" evidence="1">
    <location>
        <position position="173"/>
    </location>
</feature>
<feature type="binding site" evidence="7 9 10">
    <location>
        <position position="34"/>
    </location>
    <ligand>
        <name>substrate</name>
        <note>ligand shared between dimeric partners</note>
    </ligand>
</feature>
<feature type="binding site" evidence="4 9">
    <location>
        <position position="34"/>
    </location>
    <ligand>
        <name>Zn(2+)</name>
        <dbReference type="ChEBI" id="CHEBI:29105"/>
        <note>ligand shared between dimeric partners</note>
    </ligand>
</feature>
<feature type="binding site" evidence="8 9">
    <location>
        <position position="38"/>
    </location>
    <ligand>
        <name>substrate</name>
        <note>ligand shared between dimeric partners</note>
    </ligand>
</feature>
<feature type="binding site" evidence="4 9">
    <location>
        <position position="100"/>
    </location>
    <ligand>
        <name>Zn(2+)</name>
        <dbReference type="ChEBI" id="CHEBI:29105"/>
        <note>ligand shared between dimeric partners</note>
    </ligand>
</feature>
<feature type="binding site" evidence="8 9">
    <location>
        <position position="104"/>
    </location>
    <ligand>
        <name>substrate</name>
        <note>ligand shared between dimeric partners</note>
    </ligand>
</feature>
<feature type="binding site" description="in other chain" evidence="9">
    <location>
        <position position="123"/>
    </location>
    <ligand>
        <name>substrate</name>
        <note>ligand shared between dimeric partners</note>
    </ligand>
</feature>
<feature type="binding site" description="in other chain" evidence="9 10">
    <location>
        <position position="127"/>
    </location>
    <ligand>
        <name>substrate</name>
        <note>ligand shared between dimeric partners</note>
    </ligand>
</feature>
<feature type="binding site" description="in other chain" evidence="4 9">
    <location>
        <position position="127"/>
    </location>
    <ligand>
        <name>Zn(2+)</name>
        <dbReference type="ChEBI" id="CHEBI:29105"/>
        <note>ligand shared between dimeric partners</note>
    </ligand>
</feature>
<feature type="binding site" description="in other chain" evidence="9">
    <location>
        <begin position="157"/>
        <end position="158"/>
    </location>
    <ligand>
        <name>substrate</name>
        <note>ligand shared between dimeric partners</note>
    </ligand>
</feature>
<feature type="binding site" description="in other chain" evidence="4 9">
    <location>
        <position position="173"/>
    </location>
    <ligand>
        <name>Zn(2+)</name>
        <dbReference type="ChEBI" id="CHEBI:29105"/>
        <note>ligand shared between dimeric partners</note>
    </ligand>
</feature>
<feature type="modified residue" description="N-acetylalanine" evidence="2">
    <location>
        <position position="2"/>
    </location>
</feature>
<feature type="modified residue" description="N6-succinyllysine" evidence="11">
    <location>
        <position position="88"/>
    </location>
</feature>
<feature type="modified residue" description="Phosphothreonine" evidence="2">
    <location>
        <position position="107"/>
    </location>
</feature>
<feature type="modified residue" description="S-glutathionyl cysteine" evidence="1">
    <location>
        <position position="139"/>
    </location>
</feature>
<feature type="modified residue" description="N6-acetyllysine; alternate" evidence="2">
    <location>
        <position position="148"/>
    </location>
</feature>
<feature type="modified residue" description="N6-succinyllysine; alternate" evidence="11">
    <location>
        <position position="148"/>
    </location>
</feature>
<feature type="disulfide bond" evidence="1">
    <location>
        <begin position="19"/>
        <end position="20"/>
    </location>
</feature>
<feature type="sequence conflict" description="In Ref. 2; AAH24663." evidence="5" ref="2">
    <original>T</original>
    <variation>M</variation>
    <location>
        <position position="92"/>
    </location>
</feature>
<feature type="strand" evidence="13">
    <location>
        <begin position="7"/>
        <end position="9"/>
    </location>
</feature>
<feature type="helix" evidence="12">
    <location>
        <begin position="13"/>
        <end position="18"/>
    </location>
</feature>
<feature type="helix" evidence="12">
    <location>
        <begin position="25"/>
        <end position="27"/>
    </location>
</feature>
<feature type="strand" evidence="12">
    <location>
        <begin position="31"/>
        <end position="38"/>
    </location>
</feature>
<feature type="helix" evidence="12">
    <location>
        <begin position="42"/>
        <end position="51"/>
    </location>
</feature>
<feature type="strand" evidence="12">
    <location>
        <begin position="56"/>
        <end position="63"/>
    </location>
</feature>
<feature type="helix" evidence="12">
    <location>
        <begin position="64"/>
        <end position="66"/>
    </location>
</feature>
<feature type="strand" evidence="12">
    <location>
        <begin position="68"/>
        <end position="75"/>
    </location>
</feature>
<feature type="helix" evidence="12">
    <location>
        <begin position="78"/>
        <end position="80"/>
    </location>
</feature>
<feature type="helix" evidence="12">
    <location>
        <begin position="85"/>
        <end position="92"/>
    </location>
</feature>
<feature type="strand" evidence="12">
    <location>
        <begin position="95"/>
        <end position="104"/>
    </location>
</feature>
<feature type="helix" evidence="12">
    <location>
        <begin position="107"/>
        <end position="109"/>
    </location>
</feature>
<feature type="strand" evidence="12">
    <location>
        <begin position="118"/>
        <end position="122"/>
    </location>
</feature>
<feature type="strand" evidence="12">
    <location>
        <begin position="125"/>
        <end position="131"/>
    </location>
</feature>
<feature type="helix" evidence="12">
    <location>
        <begin position="135"/>
        <end position="144"/>
    </location>
</feature>
<feature type="strand" evidence="12">
    <location>
        <begin position="149"/>
        <end position="151"/>
    </location>
</feature>
<feature type="strand" evidence="12">
    <location>
        <begin position="155"/>
        <end position="158"/>
    </location>
</feature>
<feature type="strand" evidence="12">
    <location>
        <begin position="162"/>
        <end position="165"/>
    </location>
</feature>
<feature type="strand" evidence="12">
    <location>
        <begin position="171"/>
        <end position="175"/>
    </location>
</feature>
<feature type="turn" evidence="12">
    <location>
        <begin position="177"/>
        <end position="179"/>
    </location>
</feature>
<feature type="helix" evidence="12">
    <location>
        <begin position="180"/>
        <end position="182"/>
    </location>
</feature>
<reference key="1">
    <citation type="journal article" date="2005" name="Science">
        <title>The transcriptional landscape of the mammalian genome.</title>
        <authorList>
            <person name="Carninci P."/>
            <person name="Kasukawa T."/>
            <person name="Katayama S."/>
            <person name="Gough J."/>
            <person name="Frith M.C."/>
            <person name="Maeda N."/>
            <person name="Oyama R."/>
            <person name="Ravasi T."/>
            <person name="Lenhard B."/>
            <person name="Wells C."/>
            <person name="Kodzius R."/>
            <person name="Shimokawa K."/>
            <person name="Bajic V.B."/>
            <person name="Brenner S.E."/>
            <person name="Batalov S."/>
            <person name="Forrest A.R."/>
            <person name="Zavolan M."/>
            <person name="Davis M.J."/>
            <person name="Wilming L.G."/>
            <person name="Aidinis V."/>
            <person name="Allen J.E."/>
            <person name="Ambesi-Impiombato A."/>
            <person name="Apweiler R."/>
            <person name="Aturaliya R.N."/>
            <person name="Bailey T.L."/>
            <person name="Bansal M."/>
            <person name="Baxter L."/>
            <person name="Beisel K.W."/>
            <person name="Bersano T."/>
            <person name="Bono H."/>
            <person name="Chalk A.M."/>
            <person name="Chiu K.P."/>
            <person name="Choudhary V."/>
            <person name="Christoffels A."/>
            <person name="Clutterbuck D.R."/>
            <person name="Crowe M.L."/>
            <person name="Dalla E."/>
            <person name="Dalrymple B.P."/>
            <person name="de Bono B."/>
            <person name="Della Gatta G."/>
            <person name="di Bernardo D."/>
            <person name="Down T."/>
            <person name="Engstrom P."/>
            <person name="Fagiolini M."/>
            <person name="Faulkner G."/>
            <person name="Fletcher C.F."/>
            <person name="Fukushima T."/>
            <person name="Furuno M."/>
            <person name="Futaki S."/>
            <person name="Gariboldi M."/>
            <person name="Georgii-Hemming P."/>
            <person name="Gingeras T.R."/>
            <person name="Gojobori T."/>
            <person name="Green R.E."/>
            <person name="Gustincich S."/>
            <person name="Harbers M."/>
            <person name="Hayashi Y."/>
            <person name="Hensch T.K."/>
            <person name="Hirokawa N."/>
            <person name="Hill D."/>
            <person name="Huminiecki L."/>
            <person name="Iacono M."/>
            <person name="Ikeo K."/>
            <person name="Iwama A."/>
            <person name="Ishikawa T."/>
            <person name="Jakt M."/>
            <person name="Kanapin A."/>
            <person name="Katoh M."/>
            <person name="Kawasawa Y."/>
            <person name="Kelso J."/>
            <person name="Kitamura H."/>
            <person name="Kitano H."/>
            <person name="Kollias G."/>
            <person name="Krishnan S.P."/>
            <person name="Kruger A."/>
            <person name="Kummerfeld S.K."/>
            <person name="Kurochkin I.V."/>
            <person name="Lareau L.F."/>
            <person name="Lazarevic D."/>
            <person name="Lipovich L."/>
            <person name="Liu J."/>
            <person name="Liuni S."/>
            <person name="McWilliam S."/>
            <person name="Madan Babu M."/>
            <person name="Madera M."/>
            <person name="Marchionni L."/>
            <person name="Matsuda H."/>
            <person name="Matsuzawa S."/>
            <person name="Miki H."/>
            <person name="Mignone F."/>
            <person name="Miyake S."/>
            <person name="Morris K."/>
            <person name="Mottagui-Tabar S."/>
            <person name="Mulder N."/>
            <person name="Nakano N."/>
            <person name="Nakauchi H."/>
            <person name="Ng P."/>
            <person name="Nilsson R."/>
            <person name="Nishiguchi S."/>
            <person name="Nishikawa S."/>
            <person name="Nori F."/>
            <person name="Ohara O."/>
            <person name="Okazaki Y."/>
            <person name="Orlando V."/>
            <person name="Pang K.C."/>
            <person name="Pavan W.J."/>
            <person name="Pavesi G."/>
            <person name="Pesole G."/>
            <person name="Petrovsky N."/>
            <person name="Piazza S."/>
            <person name="Reed J."/>
            <person name="Reid J.F."/>
            <person name="Ring B.Z."/>
            <person name="Ringwald M."/>
            <person name="Rost B."/>
            <person name="Ruan Y."/>
            <person name="Salzberg S.L."/>
            <person name="Sandelin A."/>
            <person name="Schneider C."/>
            <person name="Schoenbach C."/>
            <person name="Sekiguchi K."/>
            <person name="Semple C.A."/>
            <person name="Seno S."/>
            <person name="Sessa L."/>
            <person name="Sheng Y."/>
            <person name="Shibata Y."/>
            <person name="Shimada H."/>
            <person name="Shimada K."/>
            <person name="Silva D."/>
            <person name="Sinclair B."/>
            <person name="Sperling S."/>
            <person name="Stupka E."/>
            <person name="Sugiura K."/>
            <person name="Sultana R."/>
            <person name="Takenaka Y."/>
            <person name="Taki K."/>
            <person name="Tammoja K."/>
            <person name="Tan S.L."/>
            <person name="Tang S."/>
            <person name="Taylor M.S."/>
            <person name="Tegner J."/>
            <person name="Teichmann S.A."/>
            <person name="Ueda H.R."/>
            <person name="van Nimwegen E."/>
            <person name="Verardo R."/>
            <person name="Wei C.L."/>
            <person name="Yagi K."/>
            <person name="Yamanishi H."/>
            <person name="Zabarovsky E."/>
            <person name="Zhu S."/>
            <person name="Zimmer A."/>
            <person name="Hide W."/>
            <person name="Bult C."/>
            <person name="Grimmond S.M."/>
            <person name="Teasdale R.D."/>
            <person name="Liu E.T."/>
            <person name="Brusic V."/>
            <person name="Quackenbush J."/>
            <person name="Wahlestedt C."/>
            <person name="Mattick J.S."/>
            <person name="Hume D.A."/>
            <person name="Kai C."/>
            <person name="Sasaki D."/>
            <person name="Tomaru Y."/>
            <person name="Fukuda S."/>
            <person name="Kanamori-Katayama M."/>
            <person name="Suzuki M."/>
            <person name="Aoki J."/>
            <person name="Arakawa T."/>
            <person name="Iida J."/>
            <person name="Imamura K."/>
            <person name="Itoh M."/>
            <person name="Kato T."/>
            <person name="Kawaji H."/>
            <person name="Kawagashira N."/>
            <person name="Kawashima T."/>
            <person name="Kojima M."/>
            <person name="Kondo S."/>
            <person name="Konno H."/>
            <person name="Nakano K."/>
            <person name="Ninomiya N."/>
            <person name="Nishio T."/>
            <person name="Okada M."/>
            <person name="Plessy C."/>
            <person name="Shibata K."/>
            <person name="Shiraki T."/>
            <person name="Suzuki S."/>
            <person name="Tagami M."/>
            <person name="Waki K."/>
            <person name="Watahiki A."/>
            <person name="Okamura-Oho Y."/>
            <person name="Suzuki H."/>
            <person name="Kawai J."/>
            <person name="Hayashizaki Y."/>
        </authorList>
    </citation>
    <scope>NUCLEOTIDE SEQUENCE [LARGE SCALE MRNA]</scope>
    <source>
        <strain>C57BL/6J</strain>
        <tissue>Embryo</tissue>
        <tissue>Kidney</tissue>
        <tissue>Liver</tissue>
        <tissue>Medulla oblongata</tissue>
        <tissue>Spinal cord</tissue>
    </source>
</reference>
<reference key="2">
    <citation type="journal article" date="2004" name="Genome Res.">
        <title>The status, quality, and expansion of the NIH full-length cDNA project: the Mammalian Gene Collection (MGC).</title>
        <authorList>
            <consortium name="The MGC Project Team"/>
        </authorList>
    </citation>
    <scope>NUCLEOTIDE SEQUENCE [LARGE SCALE MRNA]</scope>
    <source>
        <strain>C57BL/6J</strain>
        <strain>Czech II</strain>
        <tissue>Brain</tissue>
        <tissue>Mammary gland</tissue>
    </source>
</reference>
<reference key="3">
    <citation type="journal article" date="2005" name="J. Neurosci.">
        <title>Identification of glyoxalase-I as a protein marker in a mouse model of extremes in trait anxiety.</title>
        <authorList>
            <person name="Kroemer S.A."/>
            <person name="Kessler M.S."/>
            <person name="Milfay D."/>
            <person name="Birg I.N."/>
            <person name="Bunck M."/>
            <person name="Czibere L."/>
            <person name="Panhuysen M."/>
            <person name="Puetz B."/>
            <person name="Deussing J.M."/>
            <person name="Holsboer F."/>
            <person name="Landgraf R."/>
            <person name="Turck C.W."/>
        </authorList>
    </citation>
    <scope>IDENTIFICATION BY MASS SPECTROMETRY</scope>
    <scope>EXPRESSION IN CD-1 STRAIN</scope>
</reference>
<reference key="4">
    <citation type="journal article" date="2010" name="Cell">
        <title>A tissue-specific atlas of mouse protein phosphorylation and expression.</title>
        <authorList>
            <person name="Huttlin E.L."/>
            <person name="Jedrychowski M.P."/>
            <person name="Elias J.E."/>
            <person name="Goswami T."/>
            <person name="Rad R."/>
            <person name="Beausoleil S.A."/>
            <person name="Villen J."/>
            <person name="Haas W."/>
            <person name="Sowa M.E."/>
            <person name="Gygi S.P."/>
        </authorList>
    </citation>
    <scope>IDENTIFICATION BY MASS SPECTROMETRY [LARGE SCALE ANALYSIS]</scope>
    <source>
        <tissue>Brain</tissue>
        <tissue>Brown adipose tissue</tissue>
        <tissue>Heart</tissue>
        <tissue>Kidney</tissue>
        <tissue>Liver</tissue>
        <tissue>Lung</tissue>
        <tissue>Pancreas</tissue>
        <tissue>Spleen</tissue>
        <tissue>Testis</tissue>
    </source>
</reference>
<reference key="5">
    <citation type="journal article" date="2013" name="Mol. Cell">
        <title>SIRT5-mediated lysine desuccinylation impacts diverse metabolic pathways.</title>
        <authorList>
            <person name="Park J."/>
            <person name="Chen Y."/>
            <person name="Tishkoff D.X."/>
            <person name="Peng C."/>
            <person name="Tan M."/>
            <person name="Dai L."/>
            <person name="Xie Z."/>
            <person name="Zhang Y."/>
            <person name="Zwaans B.M."/>
            <person name="Skinner M.E."/>
            <person name="Lombard D.B."/>
            <person name="Zhao Y."/>
        </authorList>
    </citation>
    <scope>SUCCINYLATION [LARGE SCALE ANALYSIS] AT LYS-88 AND LYS-148</scope>
    <scope>IDENTIFICATION BY MASS SPECTROMETRY [LARGE SCALE ANALYSIS]</scope>
    <source>
        <tissue>Liver</tissue>
    </source>
</reference>
<reference key="6">
    <citation type="journal article" date="2008" name="Proc. Natl. Acad. Sci. U.S.A.">
        <title>The identification of an osteoclastogenesis inhibitor through the inhibition of glyoxalase I.</title>
        <authorList>
            <person name="Kawatani M."/>
            <person name="Okumura H."/>
            <person name="Honda K."/>
            <person name="Kanoh N."/>
            <person name="Muroi M."/>
            <person name="Dohmae N."/>
            <person name="Takami M."/>
            <person name="Kitagawa M."/>
            <person name="Futamura Y."/>
            <person name="Imoto M."/>
            <person name="Osada H."/>
        </authorList>
    </citation>
    <scope>X-RAY CRYSTALLOGRAPHY (1.7 ANGSTROMS) IN COMPLEX WITH METHYL-GERFELIN</scope>
    <scope>FUNCTION</scope>
    <scope>CATALYTIC ACTIVITY</scope>
    <scope>COFACTOR</scope>
    <scope>ACTIVITY REGULATION</scope>
    <scope>SUBUNIT</scope>
    <scope>ZINC-BINDING SITES</scope>
</reference>
<keyword id="KW-0002">3D-structure</keyword>
<keyword id="KW-0007">Acetylation</keyword>
<keyword id="KW-1015">Disulfide bond</keyword>
<keyword id="KW-0318">Glutathionylation</keyword>
<keyword id="KW-0456">Lyase</keyword>
<keyword id="KW-0479">Metal-binding</keyword>
<keyword id="KW-0597">Phosphoprotein</keyword>
<keyword id="KW-1185">Reference proteome</keyword>
<keyword id="KW-0862">Zinc</keyword>
<sequence>MAEPQPASSGLTDETAFSCCSDPDPSTKDFLLQQTMLRIKDPKKSLDFYTRVLGLTLLQKLDFPAMKFSLYFLAYEDKNDIPKDKSEKTAWTFSRKATLELTHNWGTEDDETQSYHNGNSDPRGFGHIGIAVPDVYSACKRFEELGVKFVKKPDDGKMKGLAFIQDPDGYWIEILNPNKIATII</sequence>
<accession>Q9CPU0</accession>
<accession>Q543L3</accession>
<accession>Q8R3T1</accession>
<organism>
    <name type="scientific">Mus musculus</name>
    <name type="common">Mouse</name>
    <dbReference type="NCBI Taxonomy" id="10090"/>
    <lineage>
        <taxon>Eukaryota</taxon>
        <taxon>Metazoa</taxon>
        <taxon>Chordata</taxon>
        <taxon>Craniata</taxon>
        <taxon>Vertebrata</taxon>
        <taxon>Euteleostomi</taxon>
        <taxon>Mammalia</taxon>
        <taxon>Eutheria</taxon>
        <taxon>Euarchontoglires</taxon>
        <taxon>Glires</taxon>
        <taxon>Rodentia</taxon>
        <taxon>Myomorpha</taxon>
        <taxon>Muroidea</taxon>
        <taxon>Muridae</taxon>
        <taxon>Murinae</taxon>
        <taxon>Mus</taxon>
        <taxon>Mus</taxon>
    </lineage>
</organism>
<comment type="function">
    <text evidence="2 4">Catalyzes the conversion of hemimercaptal, formed from methylglyoxal and glutathione, to S-lactoylglutathione (PubMed:18695250). Involved in the regulation of TNF-induced transcriptional activity of NF-kappa-B (By similarity). Required for normal osteoclastogenesis (PubMed:18695250).</text>
</comment>
<comment type="catalytic activity">
    <reaction evidence="4">
        <text>(R)-S-lactoylglutathione = methylglyoxal + glutathione</text>
        <dbReference type="Rhea" id="RHEA:19069"/>
        <dbReference type="ChEBI" id="CHEBI:17158"/>
        <dbReference type="ChEBI" id="CHEBI:57474"/>
        <dbReference type="ChEBI" id="CHEBI:57925"/>
        <dbReference type="EC" id="4.4.1.5"/>
    </reaction>
    <physiologicalReaction direction="right-to-left" evidence="6">
        <dbReference type="Rhea" id="RHEA:19071"/>
    </physiologicalReaction>
</comment>
<comment type="cofactor">
    <cofactor evidence="4">
        <name>Zn(2+)</name>
        <dbReference type="ChEBI" id="CHEBI:29105"/>
    </cofactor>
    <text evidence="4">Binds 1 zinc ion per subunit. In the homodimer, two zinc ions are bound between subunits.</text>
</comment>
<comment type="activity regulation">
    <text evidence="4">Subject to competitive inhibition by methyl-gerfelin.</text>
</comment>
<comment type="pathway">
    <text>Secondary metabolite metabolism; methylglyoxal degradation; (R)-lactate from methylglyoxal: step 1/2.</text>
</comment>
<comment type="subunit">
    <text evidence="4">Homodimer.</text>
</comment>
<comment type="PTM">
    <text evidence="2">Glutathionylation at Cys-139 inhibits enzyme activity.</text>
</comment>
<comment type="PTM">
    <text evidence="2">Phosphorylated at Thr-107 in the presence of CaMK2. However, this is a consensus site for phosphorylation by CK2 so phosphorylation may be mediated by CK2 rather than CaMK2. Phosphorylation is induced by TNF and suppresses the TNF-induced transcriptional activity of NF-kappa-B (By similarity).</text>
</comment>
<comment type="PTM">
    <text evidence="2">Exists in a nitric oxide (NO)-modified form. The exact nature of the modification is unknown, but it suppresses the TNF-induced transcriptional activity of NF-kappa-B (By similarity).</text>
</comment>
<comment type="miscellaneous">
    <text>Expressed at higher levels in CD-1 mice which have been bred for low-anxiety-related behavior than in those which have been bred for high-anxiety-related behavior.</text>
</comment>
<comment type="similarity">
    <text evidence="5">Belongs to the glyoxalase I family.</text>
</comment>
<name>LGUL_MOUSE</name>
<protein>
    <recommendedName>
        <fullName>Lactoylglutathione lyase</fullName>
        <ecNumber evidence="4">4.4.1.5</ecNumber>
    </recommendedName>
    <alternativeName>
        <fullName>Aldoketomutase</fullName>
    </alternativeName>
    <alternativeName>
        <fullName>Glyoxalase I</fullName>
        <shortName>Glx I</shortName>
    </alternativeName>
    <alternativeName>
        <fullName>Ketone-aldehyde mutase</fullName>
    </alternativeName>
    <alternativeName>
        <fullName>Methylglyoxalase</fullName>
    </alternativeName>
    <alternativeName>
        <fullName>S-D-lactoylglutathione methylglyoxal lyase</fullName>
    </alternativeName>
</protein>
<dbReference type="EC" id="4.4.1.5" evidence="4"/>
<dbReference type="EMBL" id="AK002386">
    <property type="protein sequence ID" value="BAB22060.1"/>
    <property type="molecule type" value="mRNA"/>
</dbReference>
<dbReference type="EMBL" id="AK003567">
    <property type="protein sequence ID" value="BAB22863.1"/>
    <property type="molecule type" value="mRNA"/>
</dbReference>
<dbReference type="EMBL" id="AK005055">
    <property type="protein sequence ID" value="BAB23781.1"/>
    <property type="molecule type" value="mRNA"/>
</dbReference>
<dbReference type="EMBL" id="AK031832">
    <property type="protein sequence ID" value="BAC27570.1"/>
    <property type="molecule type" value="mRNA"/>
</dbReference>
<dbReference type="EMBL" id="AK049703">
    <property type="protein sequence ID" value="BAC33882.1"/>
    <property type="molecule type" value="mRNA"/>
</dbReference>
<dbReference type="EMBL" id="BC024663">
    <property type="protein sequence ID" value="AAH24663.1"/>
    <property type="molecule type" value="mRNA"/>
</dbReference>
<dbReference type="EMBL" id="BC081432">
    <property type="protein sequence ID" value="AAH81432.1"/>
    <property type="molecule type" value="mRNA"/>
</dbReference>
<dbReference type="CCDS" id="CCDS28600.1"/>
<dbReference type="RefSeq" id="NP_001107032.1">
    <property type="nucleotide sequence ID" value="NM_001113560.1"/>
</dbReference>
<dbReference type="RefSeq" id="NP_079650.3">
    <property type="nucleotide sequence ID" value="NM_025374.3"/>
</dbReference>
<dbReference type="PDB" id="2ZA0">
    <property type="method" value="X-ray"/>
    <property type="resolution" value="1.70 A"/>
    <property type="chains" value="A/B=1-184"/>
</dbReference>
<dbReference type="PDB" id="4KYH">
    <property type="method" value="X-ray"/>
    <property type="resolution" value="2.50 A"/>
    <property type="chains" value="A/B=1-184"/>
</dbReference>
<dbReference type="PDB" id="4KYK">
    <property type="method" value="X-ray"/>
    <property type="resolution" value="2.00 A"/>
    <property type="chains" value="A/B=1-184"/>
</dbReference>
<dbReference type="PDB" id="4OPN">
    <property type="method" value="X-ray"/>
    <property type="resolution" value="2.10 A"/>
    <property type="chains" value="A/B=1-184"/>
</dbReference>
<dbReference type="PDB" id="4PV5">
    <property type="method" value="X-ray"/>
    <property type="resolution" value="2.30 A"/>
    <property type="chains" value="A/B=2-184"/>
</dbReference>
<dbReference type="PDB" id="4X2A">
    <property type="method" value="X-ray"/>
    <property type="resolution" value="2.00 A"/>
    <property type="chains" value="A/B=1-184"/>
</dbReference>
<dbReference type="PDB" id="6L0U">
    <property type="method" value="X-ray"/>
    <property type="resolution" value="1.95 A"/>
    <property type="chains" value="A/B=6-184"/>
</dbReference>
<dbReference type="PDBsum" id="2ZA0"/>
<dbReference type="PDBsum" id="4KYH"/>
<dbReference type="PDBsum" id="4KYK"/>
<dbReference type="PDBsum" id="4OPN"/>
<dbReference type="PDBsum" id="4PV5"/>
<dbReference type="PDBsum" id="4X2A"/>
<dbReference type="PDBsum" id="6L0U"/>
<dbReference type="SMR" id="Q9CPU0"/>
<dbReference type="BioGRID" id="225051">
    <property type="interactions" value="6"/>
</dbReference>
<dbReference type="FunCoup" id="Q9CPU0">
    <property type="interactions" value="2175"/>
</dbReference>
<dbReference type="IntAct" id="Q9CPU0">
    <property type="interactions" value="2"/>
</dbReference>
<dbReference type="STRING" id="10090.ENSMUSP00000158296"/>
<dbReference type="BindingDB" id="Q9CPU0"/>
<dbReference type="ChEMBL" id="CHEMBL2175"/>
<dbReference type="DrugCentral" id="Q9CPU0"/>
<dbReference type="GlyGen" id="Q9CPU0">
    <property type="glycosylation" value="1 site, 1 O-linked glycan (1 site)"/>
</dbReference>
<dbReference type="iPTMnet" id="Q9CPU0"/>
<dbReference type="PhosphoSitePlus" id="Q9CPU0"/>
<dbReference type="SwissPalm" id="Q9CPU0"/>
<dbReference type="REPRODUCTION-2DPAGE" id="IPI00321734"/>
<dbReference type="REPRODUCTION-2DPAGE" id="Q9CPU0"/>
<dbReference type="CPTAC" id="non-CPTAC-3926"/>
<dbReference type="jPOST" id="Q9CPU0"/>
<dbReference type="PaxDb" id="10090-ENSMUSP00000024823"/>
<dbReference type="ProteomicsDB" id="291944"/>
<dbReference type="Pumba" id="Q9CPU0"/>
<dbReference type="Antibodypedia" id="29872">
    <property type="antibodies" value="515 antibodies from 38 providers"/>
</dbReference>
<dbReference type="DNASU" id="109801"/>
<dbReference type="Ensembl" id="ENSMUST00000167624.2">
    <property type="protein sequence ID" value="ENSMUSP00000126586.2"/>
    <property type="gene ID" value="ENSMUSG00000024026.14"/>
</dbReference>
<dbReference type="Ensembl" id="ENSMUST00000235547.2">
    <property type="protein sequence ID" value="ENSMUSP00000157858.2"/>
    <property type="gene ID" value="ENSMUSG00000024026.14"/>
</dbReference>
<dbReference type="Ensembl" id="ENSMUST00000236335.2">
    <property type="protein sequence ID" value="ENSMUSP00000158296.2"/>
    <property type="gene ID" value="ENSMUSG00000024026.14"/>
</dbReference>
<dbReference type="GeneID" id="109801"/>
<dbReference type="KEGG" id="mmu:109801"/>
<dbReference type="UCSC" id="uc012aos.1">
    <property type="organism name" value="mouse"/>
</dbReference>
<dbReference type="AGR" id="MGI:95742"/>
<dbReference type="CTD" id="2739"/>
<dbReference type="MGI" id="MGI:95742">
    <property type="gene designation" value="Glo1"/>
</dbReference>
<dbReference type="VEuPathDB" id="HostDB:ENSMUSG00000024026"/>
<dbReference type="eggNOG" id="KOG2944">
    <property type="taxonomic scope" value="Eukaryota"/>
</dbReference>
<dbReference type="GeneTree" id="ENSGT00390000009312"/>
<dbReference type="HOGENOM" id="CLU_046006_1_1_1"/>
<dbReference type="InParanoid" id="Q9CPU0"/>
<dbReference type="OMA" id="THNWDTP"/>
<dbReference type="OrthoDB" id="16820at2759"/>
<dbReference type="PhylomeDB" id="Q9CPU0"/>
<dbReference type="TreeFam" id="TF105011"/>
<dbReference type="BRENDA" id="4.4.1.5">
    <property type="organism ID" value="3474"/>
</dbReference>
<dbReference type="Reactome" id="R-MMU-70268">
    <property type="pathway name" value="Pyruvate metabolism"/>
</dbReference>
<dbReference type="UniPathway" id="UPA00619">
    <property type="reaction ID" value="UER00675"/>
</dbReference>
<dbReference type="BioGRID-ORCS" id="109801">
    <property type="hits" value="4 hits in 77 CRISPR screens"/>
</dbReference>
<dbReference type="ChiTaRS" id="Glo1">
    <property type="organism name" value="mouse"/>
</dbReference>
<dbReference type="EvolutionaryTrace" id="Q9CPU0"/>
<dbReference type="PRO" id="PR:Q9CPU0"/>
<dbReference type="Proteomes" id="UP000000589">
    <property type="component" value="Chromosome 17"/>
</dbReference>
<dbReference type="RNAct" id="Q9CPU0">
    <property type="molecule type" value="protein"/>
</dbReference>
<dbReference type="Bgee" id="ENSMUSG00000024026">
    <property type="expression patterns" value="Expressed in pineal body and 262 other cell types or tissues"/>
</dbReference>
<dbReference type="ExpressionAtlas" id="Q9CPU0">
    <property type="expression patterns" value="baseline and differential"/>
</dbReference>
<dbReference type="GO" id="GO:0005829">
    <property type="term" value="C:cytosol"/>
    <property type="evidence" value="ECO:0007669"/>
    <property type="project" value="Ensembl"/>
</dbReference>
<dbReference type="GO" id="GO:0005654">
    <property type="term" value="C:nucleoplasm"/>
    <property type="evidence" value="ECO:0007669"/>
    <property type="project" value="Ensembl"/>
</dbReference>
<dbReference type="GO" id="GO:0005886">
    <property type="term" value="C:plasma membrane"/>
    <property type="evidence" value="ECO:0007669"/>
    <property type="project" value="Ensembl"/>
</dbReference>
<dbReference type="GO" id="GO:0004462">
    <property type="term" value="F:lactoylglutathione lyase activity"/>
    <property type="evidence" value="ECO:0000314"/>
    <property type="project" value="UniProtKB"/>
</dbReference>
<dbReference type="GO" id="GO:0008270">
    <property type="term" value="F:zinc ion binding"/>
    <property type="evidence" value="ECO:0000314"/>
    <property type="project" value="UniProtKB"/>
</dbReference>
<dbReference type="GO" id="GO:0019243">
    <property type="term" value="P:methylglyoxal catabolic process to D-lactate via S-lactoyl-glutathione"/>
    <property type="evidence" value="ECO:0000305"/>
    <property type="project" value="MGI"/>
</dbReference>
<dbReference type="GO" id="GO:0043066">
    <property type="term" value="P:negative regulation of apoptotic process"/>
    <property type="evidence" value="ECO:0000250"/>
    <property type="project" value="UniProtKB"/>
</dbReference>
<dbReference type="GO" id="GO:0030316">
    <property type="term" value="P:osteoclast differentiation"/>
    <property type="evidence" value="ECO:0000315"/>
    <property type="project" value="UniProtKB"/>
</dbReference>
<dbReference type="GO" id="GO:0006357">
    <property type="term" value="P:regulation of transcription by RNA polymerase II"/>
    <property type="evidence" value="ECO:0000314"/>
    <property type="project" value="MGI"/>
</dbReference>
<dbReference type="CDD" id="cd07233">
    <property type="entry name" value="GlxI_Zn"/>
    <property type="match status" value="1"/>
</dbReference>
<dbReference type="FunFam" id="3.10.180.10:FF:000011">
    <property type="entry name" value="Lactoylglutathione lyase"/>
    <property type="match status" value="1"/>
</dbReference>
<dbReference type="Gene3D" id="3.10.180.10">
    <property type="entry name" value="2,3-Dihydroxybiphenyl 1,2-Dioxygenase, domain 1"/>
    <property type="match status" value="1"/>
</dbReference>
<dbReference type="InterPro" id="IPR029068">
    <property type="entry name" value="Glyas_Bleomycin-R_OHBP_Dase"/>
</dbReference>
<dbReference type="InterPro" id="IPR004360">
    <property type="entry name" value="Glyas_Fos-R_dOase_dom"/>
</dbReference>
<dbReference type="InterPro" id="IPR004361">
    <property type="entry name" value="Glyoxalase_1"/>
</dbReference>
<dbReference type="InterPro" id="IPR018146">
    <property type="entry name" value="Glyoxalase_1_CS"/>
</dbReference>
<dbReference type="InterPro" id="IPR037523">
    <property type="entry name" value="VOC"/>
</dbReference>
<dbReference type="NCBIfam" id="TIGR00068">
    <property type="entry name" value="glyox_I"/>
    <property type="match status" value="1"/>
</dbReference>
<dbReference type="PANTHER" id="PTHR10374:SF30">
    <property type="entry name" value="LACTOYLGLUTATHIONE LYASE"/>
    <property type="match status" value="1"/>
</dbReference>
<dbReference type="PANTHER" id="PTHR10374">
    <property type="entry name" value="LACTOYLGLUTATHIONE LYASE GLYOXALASE I"/>
    <property type="match status" value="1"/>
</dbReference>
<dbReference type="Pfam" id="PF00903">
    <property type="entry name" value="Glyoxalase"/>
    <property type="match status" value="1"/>
</dbReference>
<dbReference type="SUPFAM" id="SSF54593">
    <property type="entry name" value="Glyoxalase/Bleomycin resistance protein/Dihydroxybiphenyl dioxygenase"/>
    <property type="match status" value="1"/>
</dbReference>
<dbReference type="PROSITE" id="PS00934">
    <property type="entry name" value="GLYOXALASE_I_1"/>
    <property type="match status" value="1"/>
</dbReference>
<dbReference type="PROSITE" id="PS00935">
    <property type="entry name" value="GLYOXALASE_I_2"/>
    <property type="match status" value="1"/>
</dbReference>
<dbReference type="PROSITE" id="PS51819">
    <property type="entry name" value="VOC"/>
    <property type="match status" value="1"/>
</dbReference>
<gene>
    <name type="primary">Glo1</name>
</gene>